<reference key="1">
    <citation type="journal article" date="2010" name="J. Bacteriol.">
        <title>Whole genome sequences of two Xylella fastidiosa strains (M12 and M23) causing almond leaf scorch disease in California.</title>
        <authorList>
            <person name="Chen J."/>
            <person name="Xie G."/>
            <person name="Han S."/>
            <person name="Chertkov O."/>
            <person name="Sims D."/>
            <person name="Civerolo E.L."/>
        </authorList>
    </citation>
    <scope>NUCLEOTIDE SEQUENCE [LARGE SCALE GENOMIC DNA]</scope>
    <source>
        <strain>M12</strain>
    </source>
</reference>
<name>RSGA_XYLFM</name>
<keyword id="KW-0963">Cytoplasm</keyword>
<keyword id="KW-0342">GTP-binding</keyword>
<keyword id="KW-0378">Hydrolase</keyword>
<keyword id="KW-0479">Metal-binding</keyword>
<keyword id="KW-0547">Nucleotide-binding</keyword>
<keyword id="KW-0690">Ribosome biogenesis</keyword>
<keyword id="KW-0694">RNA-binding</keyword>
<keyword id="KW-0699">rRNA-binding</keyword>
<keyword id="KW-0862">Zinc</keyword>
<protein>
    <recommendedName>
        <fullName evidence="1">Small ribosomal subunit biogenesis GTPase RsgA</fullName>
        <ecNumber evidence="1">3.6.1.-</ecNumber>
    </recommendedName>
</protein>
<dbReference type="EC" id="3.6.1.-" evidence="1"/>
<dbReference type="EMBL" id="CP000941">
    <property type="protein sequence ID" value="ACA12645.1"/>
    <property type="molecule type" value="Genomic_DNA"/>
</dbReference>
<dbReference type="SMR" id="B0U466"/>
<dbReference type="KEGG" id="xfm:Xfasm12_1746"/>
<dbReference type="HOGENOM" id="CLU_033617_0_1_6"/>
<dbReference type="GO" id="GO:0005737">
    <property type="term" value="C:cytoplasm"/>
    <property type="evidence" value="ECO:0007669"/>
    <property type="project" value="UniProtKB-SubCell"/>
</dbReference>
<dbReference type="GO" id="GO:0005525">
    <property type="term" value="F:GTP binding"/>
    <property type="evidence" value="ECO:0007669"/>
    <property type="project" value="UniProtKB-UniRule"/>
</dbReference>
<dbReference type="GO" id="GO:0003924">
    <property type="term" value="F:GTPase activity"/>
    <property type="evidence" value="ECO:0007669"/>
    <property type="project" value="UniProtKB-UniRule"/>
</dbReference>
<dbReference type="GO" id="GO:0046872">
    <property type="term" value="F:metal ion binding"/>
    <property type="evidence" value="ECO:0007669"/>
    <property type="project" value="UniProtKB-KW"/>
</dbReference>
<dbReference type="GO" id="GO:0019843">
    <property type="term" value="F:rRNA binding"/>
    <property type="evidence" value="ECO:0007669"/>
    <property type="project" value="UniProtKB-KW"/>
</dbReference>
<dbReference type="GO" id="GO:0042274">
    <property type="term" value="P:ribosomal small subunit biogenesis"/>
    <property type="evidence" value="ECO:0007669"/>
    <property type="project" value="UniProtKB-UniRule"/>
</dbReference>
<dbReference type="CDD" id="cd01854">
    <property type="entry name" value="YjeQ_EngC"/>
    <property type="match status" value="1"/>
</dbReference>
<dbReference type="Gene3D" id="3.40.50.300">
    <property type="entry name" value="P-loop containing nucleotide triphosphate hydrolases"/>
    <property type="match status" value="1"/>
</dbReference>
<dbReference type="Gene3D" id="1.10.40.50">
    <property type="entry name" value="Probable gtpase engc, domain 3"/>
    <property type="match status" value="1"/>
</dbReference>
<dbReference type="HAMAP" id="MF_01820">
    <property type="entry name" value="GTPase_RsgA"/>
    <property type="match status" value="1"/>
</dbReference>
<dbReference type="InterPro" id="IPR030378">
    <property type="entry name" value="G_CP_dom"/>
</dbReference>
<dbReference type="InterPro" id="IPR027417">
    <property type="entry name" value="P-loop_NTPase"/>
</dbReference>
<dbReference type="InterPro" id="IPR004881">
    <property type="entry name" value="Ribosome_biogen_GTPase_RsgA"/>
</dbReference>
<dbReference type="InterPro" id="IPR010914">
    <property type="entry name" value="RsgA_GTPase_dom"/>
</dbReference>
<dbReference type="NCBIfam" id="TIGR00157">
    <property type="entry name" value="ribosome small subunit-dependent GTPase A"/>
    <property type="match status" value="1"/>
</dbReference>
<dbReference type="PANTHER" id="PTHR32120">
    <property type="entry name" value="SMALL RIBOSOMAL SUBUNIT BIOGENESIS GTPASE RSGA"/>
    <property type="match status" value="1"/>
</dbReference>
<dbReference type="PANTHER" id="PTHR32120:SF10">
    <property type="entry name" value="SMALL RIBOSOMAL SUBUNIT BIOGENESIS GTPASE RSGA"/>
    <property type="match status" value="1"/>
</dbReference>
<dbReference type="Pfam" id="PF03193">
    <property type="entry name" value="RsgA_GTPase"/>
    <property type="match status" value="1"/>
</dbReference>
<dbReference type="SUPFAM" id="SSF52540">
    <property type="entry name" value="P-loop containing nucleoside triphosphate hydrolases"/>
    <property type="match status" value="1"/>
</dbReference>
<dbReference type="PROSITE" id="PS50936">
    <property type="entry name" value="ENGC_GTPASE"/>
    <property type="match status" value="1"/>
</dbReference>
<dbReference type="PROSITE" id="PS51721">
    <property type="entry name" value="G_CP"/>
    <property type="match status" value="1"/>
</dbReference>
<organism>
    <name type="scientific">Xylella fastidiosa (strain M12)</name>
    <dbReference type="NCBI Taxonomy" id="405440"/>
    <lineage>
        <taxon>Bacteria</taxon>
        <taxon>Pseudomonadati</taxon>
        <taxon>Pseudomonadota</taxon>
        <taxon>Gammaproteobacteria</taxon>
        <taxon>Lysobacterales</taxon>
        <taxon>Lysobacteraceae</taxon>
        <taxon>Xylella</taxon>
    </lineage>
</organism>
<feature type="chain" id="PRO_1000216055" description="Small ribosomal subunit biogenesis GTPase RsgA">
    <location>
        <begin position="1"/>
        <end position="332"/>
    </location>
</feature>
<feature type="domain" description="CP-type G" evidence="2">
    <location>
        <begin position="103"/>
        <end position="259"/>
    </location>
</feature>
<feature type="binding site" evidence="1">
    <location>
        <begin position="148"/>
        <end position="151"/>
    </location>
    <ligand>
        <name>GTP</name>
        <dbReference type="ChEBI" id="CHEBI:37565"/>
    </ligand>
</feature>
<feature type="binding site" evidence="1">
    <location>
        <begin position="201"/>
        <end position="209"/>
    </location>
    <ligand>
        <name>GTP</name>
        <dbReference type="ChEBI" id="CHEBI:37565"/>
    </ligand>
</feature>
<feature type="binding site" evidence="1">
    <location>
        <position position="281"/>
    </location>
    <ligand>
        <name>Zn(2+)</name>
        <dbReference type="ChEBI" id="CHEBI:29105"/>
    </ligand>
</feature>
<feature type="binding site" evidence="1">
    <location>
        <position position="286"/>
    </location>
    <ligand>
        <name>Zn(2+)</name>
        <dbReference type="ChEBI" id="CHEBI:29105"/>
    </ligand>
</feature>
<feature type="binding site" evidence="1">
    <location>
        <position position="288"/>
    </location>
    <ligand>
        <name>Zn(2+)</name>
        <dbReference type="ChEBI" id="CHEBI:29105"/>
    </ligand>
</feature>
<feature type="binding site" evidence="1">
    <location>
        <position position="294"/>
    </location>
    <ligand>
        <name>Zn(2+)</name>
        <dbReference type="ChEBI" id="CHEBI:29105"/>
    </ligand>
</feature>
<sequence length="332" mass="36514">MLQAIGWPWPGPPADAAWQAMCAVYSQCRPARVIEQHRSGYVVAEAPEVPIKVESLPAWQRRGFPPHERAVVGDWVLLDGRRIVALLPRRTVIKRLAAGKHYRQQLIAANLDTAFIVCGLDGDFNPRRIERYCVLIASGGVEPVVVLTKVDLCVDVGAAVAVLREHFSQALAVVAVDARKAEPVVALYPWLLPGRTVALLGSSGAGKSTLTNTLLGEQRMKVGEVRQRDSRGRHTTTHRALLPLPSGACLIDTPGMRELKFTGEEDLVEEFADIELLATQCRFRDCAHQVEPGCAVRAAIGCGTLDPQRLHHYFKLRGEIVGAADRSMLRRY</sequence>
<accession>B0U466</accession>
<proteinExistence type="inferred from homology"/>
<comment type="function">
    <text evidence="1">One of several proteins that assist in the late maturation steps of the functional core of the 30S ribosomal subunit. Helps release RbfA from mature subunits. May play a role in the assembly of ribosomal proteins into the subunit. Circularly permuted GTPase that catalyzes slow GTP hydrolysis, GTPase activity is stimulated by the 30S ribosomal subunit.</text>
</comment>
<comment type="cofactor">
    <cofactor evidence="1">
        <name>Zn(2+)</name>
        <dbReference type="ChEBI" id="CHEBI:29105"/>
    </cofactor>
    <text evidence="1">Binds 1 zinc ion per subunit.</text>
</comment>
<comment type="subunit">
    <text evidence="1">Monomer. Associates with 30S ribosomal subunit, binds 16S rRNA.</text>
</comment>
<comment type="subcellular location">
    <subcellularLocation>
        <location evidence="1">Cytoplasm</location>
    </subcellularLocation>
</comment>
<comment type="similarity">
    <text evidence="1">Belongs to the TRAFAC class YlqF/YawG GTPase family. RsgA subfamily.</text>
</comment>
<gene>
    <name evidence="1" type="primary">rsgA</name>
    <name type="ordered locus">Xfasm12_1746</name>
</gene>
<evidence type="ECO:0000255" key="1">
    <source>
        <dbReference type="HAMAP-Rule" id="MF_01820"/>
    </source>
</evidence>
<evidence type="ECO:0000255" key="2">
    <source>
        <dbReference type="PROSITE-ProRule" id="PRU01058"/>
    </source>
</evidence>